<reference key="1">
    <citation type="submission" date="2004-08" db="EMBL/GenBank/DDBJ databases">
        <authorList>
            <consortium name="NIH - Xenopus Gene Collection (XGC) project"/>
        </authorList>
    </citation>
    <scope>NUCLEOTIDE SEQUENCE [LARGE SCALE MRNA]</scope>
</reference>
<gene>
    <name type="primary">zpld1</name>
</gene>
<organism>
    <name type="scientific">Xenopus laevis</name>
    <name type="common">African clawed frog</name>
    <dbReference type="NCBI Taxonomy" id="8355"/>
    <lineage>
        <taxon>Eukaryota</taxon>
        <taxon>Metazoa</taxon>
        <taxon>Chordata</taxon>
        <taxon>Craniata</taxon>
        <taxon>Vertebrata</taxon>
        <taxon>Euteleostomi</taxon>
        <taxon>Amphibia</taxon>
        <taxon>Batrachia</taxon>
        <taxon>Anura</taxon>
        <taxon>Pipoidea</taxon>
        <taxon>Pipidae</taxon>
        <taxon>Xenopodinae</taxon>
        <taxon>Xenopus</taxon>
        <taxon>Xenopus</taxon>
    </lineage>
</organism>
<evidence type="ECO:0000250" key="1">
    <source>
        <dbReference type="UniProtKB" id="C0H9B6"/>
    </source>
</evidence>
<evidence type="ECO:0000250" key="2">
    <source>
        <dbReference type="UniProtKB" id="P10761"/>
    </source>
</evidence>
<evidence type="ECO:0000255" key="3"/>
<evidence type="ECO:0000255" key="4">
    <source>
        <dbReference type="PROSITE-ProRule" id="PRU00375"/>
    </source>
</evidence>
<evidence type="ECO:0000305" key="5"/>
<comment type="function">
    <text evidence="1">Glycoprotein which is a component of the gelatinous extracellular matrix in the cupulae of the vestibular organ.</text>
</comment>
<comment type="subcellular location">
    <molecule>Zona pellucida-like domain-containing protein 1</molecule>
    <subcellularLocation>
        <location evidence="1">Cytoplasmic vesicle membrane</location>
        <topology evidence="3">Single-pass type I membrane protein</topology>
    </subcellularLocation>
</comment>
<comment type="subcellular location">
    <molecule>Zona pellucida-like domain-containing protein 1, secreted form</molecule>
    <subcellularLocation>
        <location evidence="1">Secreted</location>
        <location evidence="1">Extracellular space</location>
        <location evidence="1">Extracellular matrix</location>
    </subcellularLocation>
</comment>
<comment type="PTM">
    <text evidence="1">Proteolytically cleaved before the transmembrane segment to yield the secreted form found in the extracellular matrix of the cupula.</text>
</comment>
<keyword id="KW-0968">Cytoplasmic vesicle</keyword>
<keyword id="KW-1015">Disulfide bond</keyword>
<keyword id="KW-0272">Extracellular matrix</keyword>
<keyword id="KW-0472">Membrane</keyword>
<keyword id="KW-1185">Reference proteome</keyword>
<keyword id="KW-0964">Secreted</keyword>
<keyword id="KW-0732">Signal</keyword>
<keyword id="KW-0812">Transmembrane</keyword>
<keyword id="KW-1133">Transmembrane helix</keyword>
<protein>
    <recommendedName>
        <fullName>Zona pellucida-like domain-containing protein 1</fullName>
        <shortName>ZP domain-containing protein 1</shortName>
    </recommendedName>
    <alternativeName>
        <fullName evidence="1">Cupulin</fullName>
    </alternativeName>
    <component>
        <recommendedName>
            <fullName evidence="1">Zona pellucida-like domain-containing protein 1, secreted form</fullName>
        </recommendedName>
    </component>
</protein>
<proteinExistence type="evidence at transcript level"/>
<name>ZPLD1_XENLA</name>
<sequence length="415" mass="45730">MEPIWLLLLLAIFTVSVSAQFNGYNCDANQHSRFPAERDITVYCGVQTITMKINFCTVLFSGYSESDLSLNGKHGDAHCRGFINNNTFPAVVIFTINLSTLESCENSLVVSTVPGVNAYGIASMVQIGNISGYIDTPDPPTIISYLPGLLYKFSCSYPLEYLVNNTQLASSSAAISVREGNGTFISTLNLLLYNDSTYSQQLLIPSAGLPLKTKIYAAVRATNLDGRWNVLMDYCYTTPSGNPSDDIRYDLFLSCDKDPQTTIFENGKSQMGRFSFEVFRFVKHKNQKMSTVFLHCITKLCRSDDCHYLTPTCHNRDRRDAVIRTTLTPYSLSGNAVVSAGPIITRSDETPANNSQLAHPGNQQFQINSVTSALISGVVILGATSLSFFIIALTLLNRKKQNSLVLCGIRNPVFN</sequence>
<accession>Q66IR0</accession>
<dbReference type="EMBL" id="BC081237">
    <property type="protein sequence ID" value="AAH81237.1"/>
    <property type="molecule type" value="mRNA"/>
</dbReference>
<dbReference type="RefSeq" id="NP_001087796.1">
    <property type="nucleotide sequence ID" value="NM_001094327.1"/>
</dbReference>
<dbReference type="SMR" id="Q66IR0"/>
<dbReference type="DNASU" id="447620"/>
<dbReference type="GeneID" id="447620"/>
<dbReference type="KEGG" id="xla:447620"/>
<dbReference type="AGR" id="Xenbase:XB-GENE-5829959"/>
<dbReference type="CTD" id="447620"/>
<dbReference type="Xenbase" id="XB-GENE-5829959">
    <property type="gene designation" value="zpld1.S"/>
</dbReference>
<dbReference type="OrthoDB" id="9274484at2759"/>
<dbReference type="Proteomes" id="UP000186698">
    <property type="component" value="Chromosome 2S"/>
</dbReference>
<dbReference type="Bgee" id="447620">
    <property type="expression patterns" value="Expressed in internal ear"/>
</dbReference>
<dbReference type="GO" id="GO:0009986">
    <property type="term" value="C:cell surface"/>
    <property type="evidence" value="ECO:0000318"/>
    <property type="project" value="GO_Central"/>
</dbReference>
<dbReference type="GO" id="GO:0030659">
    <property type="term" value="C:cytoplasmic vesicle membrane"/>
    <property type="evidence" value="ECO:0007669"/>
    <property type="project" value="UniProtKB-SubCell"/>
</dbReference>
<dbReference type="GO" id="GO:0005615">
    <property type="term" value="C:extracellular space"/>
    <property type="evidence" value="ECO:0000318"/>
    <property type="project" value="GO_Central"/>
</dbReference>
<dbReference type="Gene3D" id="2.60.40.4100">
    <property type="entry name" value="Zona pellucida, ZP-C domain"/>
    <property type="match status" value="1"/>
</dbReference>
<dbReference type="InterPro" id="IPR055355">
    <property type="entry name" value="ZP-C"/>
</dbReference>
<dbReference type="InterPro" id="IPR042235">
    <property type="entry name" value="ZP-C_dom"/>
</dbReference>
<dbReference type="InterPro" id="IPR001507">
    <property type="entry name" value="ZP_dom"/>
</dbReference>
<dbReference type="PANTHER" id="PTHR14002">
    <property type="entry name" value="ENDOGLIN/TGF-BETA RECEPTOR TYPE III"/>
    <property type="match status" value="1"/>
</dbReference>
<dbReference type="PANTHER" id="PTHR14002:SF24">
    <property type="entry name" value="ZONA PELLUCIDA-LIKE DOMAIN-CONTAINING PROTEIN 1"/>
    <property type="match status" value="1"/>
</dbReference>
<dbReference type="Pfam" id="PF00100">
    <property type="entry name" value="Zona_pellucida"/>
    <property type="match status" value="1"/>
</dbReference>
<dbReference type="SMART" id="SM00241">
    <property type="entry name" value="ZP"/>
    <property type="match status" value="1"/>
</dbReference>
<dbReference type="PROSITE" id="PS51034">
    <property type="entry name" value="ZP_2"/>
    <property type="match status" value="1"/>
</dbReference>
<feature type="signal peptide" evidence="3">
    <location>
        <begin position="1"/>
        <end position="19"/>
    </location>
</feature>
<feature type="chain" id="PRO_0000307287" description="Zona pellucida-like domain-containing protein 1">
    <location>
        <begin position="20"/>
        <end position="415"/>
    </location>
</feature>
<feature type="chain" id="PRO_0000441817" description="Zona pellucida-like domain-containing protein 1, secreted form" evidence="5">
    <location>
        <begin position="20"/>
        <end position="319"/>
    </location>
</feature>
<feature type="topological domain" description="Extracellular" evidence="3">
    <location>
        <begin position="20"/>
        <end position="372"/>
    </location>
</feature>
<feature type="transmembrane region" description="Helical" evidence="3">
    <location>
        <begin position="373"/>
        <end position="393"/>
    </location>
</feature>
<feature type="topological domain" description="Cytoplasmic" evidence="3">
    <location>
        <begin position="394"/>
        <end position="415"/>
    </location>
</feature>
<feature type="domain" description="ZP" evidence="4">
    <location>
        <begin position="43"/>
        <end position="320"/>
    </location>
</feature>
<feature type="site" description="Cleavage" evidence="2">
    <location>
        <begin position="319"/>
        <end position="320"/>
    </location>
</feature>
<feature type="disulfide bond" evidence="2">
    <location>
        <begin position="44"/>
        <end position="155"/>
    </location>
</feature>
<feature type="disulfide bond" evidence="2">
    <location>
        <begin position="79"/>
        <end position="104"/>
    </location>
</feature>
<feature type="disulfide bond" evidence="2">
    <location>
        <begin position="235"/>
        <end position="296"/>
    </location>
</feature>
<feature type="disulfide bond" evidence="2">
    <location>
        <begin position="255"/>
        <end position="313"/>
    </location>
</feature>